<keyword id="KW-1185">Reference proteome</keyword>
<proteinExistence type="inferred from homology"/>
<sequence>MKKTRDNPCDKIELGNKTSQKGVSLVKKHIFEDIILQNALNFTEEVVEIFGDLLNKGMNITELVARIKELTDKLGRGAIEAIIEELDRIIKEDKRRKEKWVVERKDKKRLTTVLGDIEYERTYYKSKEDGRYTYLVDDALEIGRHDRIEKGVKIKLVENAIEESYERSSKKACPEELSKQTVLNAIREIGEVEVKREIKEKKEVRVLYIEADEDHVPLQDGRDETPRLVYIHEGREEKNGRNVLKNVYYKAYVGEKPEDIWIDVANYIEDNYKEEKIEKIYIAGDGAPWIKEGLKWILKSRFVLDRYHLNKYVLKATSKEPKYRDKIWRAINEGDKERVKKVFDELIKAAEEEREKEKIKEAKKYILNNWEGIKIYNEDEDVIGCSAEGHISHVFSARLSRNPLGWSREGLKLMAKLRVFSKNGGDLREVEWGKKKNINAGSYKLTKKQIKEAVRRVKTSTNEKINNITVLNIGKVTPIYRVLRALKYAQVI</sequence>
<protein>
    <recommendedName>
        <fullName>UPF0236 protein TTE1650/TTE2708</fullName>
    </recommendedName>
</protein>
<organism>
    <name type="scientific">Caldanaerobacter subterraneus subsp. tengcongensis (strain DSM 15242 / JCM 11007 / NBRC 100824 / MB4)</name>
    <name type="common">Thermoanaerobacter tengcongensis</name>
    <dbReference type="NCBI Taxonomy" id="273068"/>
    <lineage>
        <taxon>Bacteria</taxon>
        <taxon>Bacillati</taxon>
        <taxon>Bacillota</taxon>
        <taxon>Clostridia</taxon>
        <taxon>Thermoanaerobacterales</taxon>
        <taxon>Thermoanaerobacteraceae</taxon>
        <taxon>Caldanaerobacter</taxon>
    </lineage>
</organism>
<accession>Q8R6I9</accession>
<comment type="similarity">
    <text evidence="1">Belongs to the UPF0236 family.</text>
</comment>
<evidence type="ECO:0000305" key="1"/>
<dbReference type="EMBL" id="AE008691">
    <property type="protein sequence ID" value="AAM24852.1"/>
    <property type="molecule type" value="Genomic_DNA"/>
</dbReference>
<dbReference type="EMBL" id="AE008691">
    <property type="protein sequence ID" value="AAM25825.1"/>
    <property type="molecule type" value="Genomic_DNA"/>
</dbReference>
<dbReference type="STRING" id="273068.TTE1650"/>
<dbReference type="KEGG" id="tte:TTE1650"/>
<dbReference type="KEGG" id="tte:TTE2708"/>
<dbReference type="eggNOG" id="COG3464">
    <property type="taxonomic scope" value="Bacteria"/>
</dbReference>
<dbReference type="HOGENOM" id="CLU_040782_0_1_9"/>
<dbReference type="Proteomes" id="UP000000555">
    <property type="component" value="Chromosome"/>
</dbReference>
<dbReference type="InterPro" id="IPR009620">
    <property type="entry name" value="UPF0236"/>
</dbReference>
<dbReference type="NCBIfam" id="NF033529">
    <property type="entry name" value="transpos_ISLre2"/>
    <property type="match status" value="1"/>
</dbReference>
<dbReference type="Pfam" id="PF06782">
    <property type="entry name" value="UPF0236"/>
    <property type="match status" value="1"/>
</dbReference>
<feature type="chain" id="PRO_0000220412" description="UPF0236 protein TTE1650/TTE2708">
    <location>
        <begin position="1"/>
        <end position="492"/>
    </location>
</feature>
<gene>
    <name type="ordered locus">TTE1650</name>
</gene>
<gene>
    <name type="ordered locus">TTE2708</name>
</gene>
<name>Y1650_CALS4</name>
<reference key="1">
    <citation type="journal article" date="2002" name="Genome Res.">
        <title>A complete sequence of the T. tengcongensis genome.</title>
        <authorList>
            <person name="Bao Q."/>
            <person name="Tian Y."/>
            <person name="Li W."/>
            <person name="Xu Z."/>
            <person name="Xuan Z."/>
            <person name="Hu S."/>
            <person name="Dong W."/>
            <person name="Yang J."/>
            <person name="Chen Y."/>
            <person name="Xue Y."/>
            <person name="Xu Y."/>
            <person name="Lai X."/>
            <person name="Huang L."/>
            <person name="Dong X."/>
            <person name="Ma Y."/>
            <person name="Ling L."/>
            <person name="Tan H."/>
            <person name="Chen R."/>
            <person name="Wang J."/>
            <person name="Yu J."/>
            <person name="Yang H."/>
        </authorList>
    </citation>
    <scope>NUCLEOTIDE SEQUENCE [LARGE SCALE GENOMIC DNA]</scope>
    <source>
        <strain>DSM 15242 / JCM 11007 / NBRC 100824 / MB4</strain>
    </source>
</reference>